<comment type="function">
    <text evidence="9">Modulates exocytosis of dense-core granules and secretion of hormones in the pancreas and the pituitary. Interacts with vesicles containing negatively charged phospholipids in a Ca(2+)-independent manner.</text>
</comment>
<comment type="subunit">
    <text evidence="5 6 7 8 9 10">Part of a ternary complex containing STX1A and RAB27A. Can bind both dominant negative and dominant active mutants of RAB27A. Binds STXBP1, RAB3A, RAB8A and RAB27B. Interacts with MYO5A.</text>
</comment>
<comment type="interaction">
    <interactant intactId="EBI-15734647">
        <id>Q9R0Q1-1</id>
    </interactant>
    <interactant intactId="EBI-398172">
        <id>Q9ERI2</id>
        <label>Rab27a</label>
    </interactant>
    <organismsDiffer>false</organismsDiffer>
    <experiments>2</experiments>
</comment>
<comment type="subcellular location">
    <subcellularLocation>
        <location evidence="5">Membrane</location>
        <topology evidence="5">Peripheral membrane protein</topology>
    </subcellularLocation>
    <subcellularLocation>
        <location evidence="5">Cytoplasmic vesicle</location>
        <location evidence="5">Secretory vesicle membrane</location>
        <topology evidence="5">Peripheral membrane protein</topology>
    </subcellularLocation>
    <text>Detected close to the plasma membrane and on secretory granules. In pancreas, interacts with insulin-containing vesicles.</text>
</comment>
<comment type="alternative products">
    <event type="alternative splicing"/>
    <isoform>
        <id>Q9R0Q1-1</id>
        <name>1</name>
        <name>Granuphilin-a</name>
        <sequence type="displayed"/>
    </isoform>
    <isoform>
        <id>Q9R0Q1-2</id>
        <name>2</name>
        <name>Granuphilin-b</name>
        <sequence type="described" ref="VSP_007900 VSP_007901"/>
    </isoform>
    <isoform>
        <id>Q9R0Q1-3</id>
        <name>3</name>
        <sequence type="described" ref="VSP_007902"/>
    </isoform>
</comment>
<comment type="tissue specificity">
    <text evidence="5">Detected in the pancreatic islet, in particular in insulin-positive beta cells, and in pituitary.</text>
</comment>
<comment type="miscellaneous">
    <molecule>Isoform 3</molecule>
    <text evidence="14">May be due to an intron retention.</text>
</comment>
<proteinExistence type="evidence at protein level"/>
<gene>
    <name type="primary">Sytl4</name>
    <name type="synonym">Slp4</name>
</gene>
<name>SYTL4_MOUSE</name>
<organism>
    <name type="scientific">Mus musculus</name>
    <name type="common">Mouse</name>
    <dbReference type="NCBI Taxonomy" id="10090"/>
    <lineage>
        <taxon>Eukaryota</taxon>
        <taxon>Metazoa</taxon>
        <taxon>Chordata</taxon>
        <taxon>Craniata</taxon>
        <taxon>Vertebrata</taxon>
        <taxon>Euteleostomi</taxon>
        <taxon>Mammalia</taxon>
        <taxon>Eutheria</taxon>
        <taxon>Euarchontoglires</taxon>
        <taxon>Glires</taxon>
        <taxon>Rodentia</taxon>
        <taxon>Myomorpha</taxon>
        <taxon>Muroidea</taxon>
        <taxon>Muridae</taxon>
        <taxon>Murinae</taxon>
        <taxon>Mus</taxon>
        <taxon>Mus</taxon>
    </lineage>
</organism>
<protein>
    <recommendedName>
        <fullName>Synaptotagmin-like protein 4</fullName>
    </recommendedName>
    <alternativeName>
        <fullName>Exophilin-2</fullName>
    </alternativeName>
    <alternativeName>
        <fullName>Granuphilin</fullName>
    </alternativeName>
</protein>
<reference key="1">
    <citation type="journal article" date="1999" name="J. Biol. Chem.">
        <title>Novel rabphilin-3-like protein associates with insulin-containing granules in pancreatic beta cells.</title>
        <authorList>
            <person name="Wang J."/>
            <person name="Takeuchi T."/>
            <person name="Yokota H."/>
            <person name="Izumi T."/>
        </authorList>
    </citation>
    <scope>NUCLEOTIDE SEQUENCE [MRNA] (ISOFORMS 1 AND 2)</scope>
    <scope>SUBCELLULAR LOCATION</scope>
    <scope>TISSUE SPECIFICITY</scope>
    <scope>INTERACTION WITH PHOSPHOLIPIDS</scope>
    <source>
        <tissue>Pancreas</tissue>
    </source>
</reference>
<reference key="2">
    <citation type="journal article" date="2005" name="Science">
        <title>The transcriptional landscape of the mammalian genome.</title>
        <authorList>
            <person name="Carninci P."/>
            <person name="Kasukawa T."/>
            <person name="Katayama S."/>
            <person name="Gough J."/>
            <person name="Frith M.C."/>
            <person name="Maeda N."/>
            <person name="Oyama R."/>
            <person name="Ravasi T."/>
            <person name="Lenhard B."/>
            <person name="Wells C."/>
            <person name="Kodzius R."/>
            <person name="Shimokawa K."/>
            <person name="Bajic V.B."/>
            <person name="Brenner S.E."/>
            <person name="Batalov S."/>
            <person name="Forrest A.R."/>
            <person name="Zavolan M."/>
            <person name="Davis M.J."/>
            <person name="Wilming L.G."/>
            <person name="Aidinis V."/>
            <person name="Allen J.E."/>
            <person name="Ambesi-Impiombato A."/>
            <person name="Apweiler R."/>
            <person name="Aturaliya R.N."/>
            <person name="Bailey T.L."/>
            <person name="Bansal M."/>
            <person name="Baxter L."/>
            <person name="Beisel K.W."/>
            <person name="Bersano T."/>
            <person name="Bono H."/>
            <person name="Chalk A.M."/>
            <person name="Chiu K.P."/>
            <person name="Choudhary V."/>
            <person name="Christoffels A."/>
            <person name="Clutterbuck D.R."/>
            <person name="Crowe M.L."/>
            <person name="Dalla E."/>
            <person name="Dalrymple B.P."/>
            <person name="de Bono B."/>
            <person name="Della Gatta G."/>
            <person name="di Bernardo D."/>
            <person name="Down T."/>
            <person name="Engstrom P."/>
            <person name="Fagiolini M."/>
            <person name="Faulkner G."/>
            <person name="Fletcher C.F."/>
            <person name="Fukushima T."/>
            <person name="Furuno M."/>
            <person name="Futaki S."/>
            <person name="Gariboldi M."/>
            <person name="Georgii-Hemming P."/>
            <person name="Gingeras T.R."/>
            <person name="Gojobori T."/>
            <person name="Green R.E."/>
            <person name="Gustincich S."/>
            <person name="Harbers M."/>
            <person name="Hayashi Y."/>
            <person name="Hensch T.K."/>
            <person name="Hirokawa N."/>
            <person name="Hill D."/>
            <person name="Huminiecki L."/>
            <person name="Iacono M."/>
            <person name="Ikeo K."/>
            <person name="Iwama A."/>
            <person name="Ishikawa T."/>
            <person name="Jakt M."/>
            <person name="Kanapin A."/>
            <person name="Katoh M."/>
            <person name="Kawasawa Y."/>
            <person name="Kelso J."/>
            <person name="Kitamura H."/>
            <person name="Kitano H."/>
            <person name="Kollias G."/>
            <person name="Krishnan S.P."/>
            <person name="Kruger A."/>
            <person name="Kummerfeld S.K."/>
            <person name="Kurochkin I.V."/>
            <person name="Lareau L.F."/>
            <person name="Lazarevic D."/>
            <person name="Lipovich L."/>
            <person name="Liu J."/>
            <person name="Liuni S."/>
            <person name="McWilliam S."/>
            <person name="Madan Babu M."/>
            <person name="Madera M."/>
            <person name="Marchionni L."/>
            <person name="Matsuda H."/>
            <person name="Matsuzawa S."/>
            <person name="Miki H."/>
            <person name="Mignone F."/>
            <person name="Miyake S."/>
            <person name="Morris K."/>
            <person name="Mottagui-Tabar S."/>
            <person name="Mulder N."/>
            <person name="Nakano N."/>
            <person name="Nakauchi H."/>
            <person name="Ng P."/>
            <person name="Nilsson R."/>
            <person name="Nishiguchi S."/>
            <person name="Nishikawa S."/>
            <person name="Nori F."/>
            <person name="Ohara O."/>
            <person name="Okazaki Y."/>
            <person name="Orlando V."/>
            <person name="Pang K.C."/>
            <person name="Pavan W.J."/>
            <person name="Pavesi G."/>
            <person name="Pesole G."/>
            <person name="Petrovsky N."/>
            <person name="Piazza S."/>
            <person name="Reed J."/>
            <person name="Reid J.F."/>
            <person name="Ring B.Z."/>
            <person name="Ringwald M."/>
            <person name="Rost B."/>
            <person name="Ruan Y."/>
            <person name="Salzberg S.L."/>
            <person name="Sandelin A."/>
            <person name="Schneider C."/>
            <person name="Schoenbach C."/>
            <person name="Sekiguchi K."/>
            <person name="Semple C.A."/>
            <person name="Seno S."/>
            <person name="Sessa L."/>
            <person name="Sheng Y."/>
            <person name="Shibata Y."/>
            <person name="Shimada H."/>
            <person name="Shimada K."/>
            <person name="Silva D."/>
            <person name="Sinclair B."/>
            <person name="Sperling S."/>
            <person name="Stupka E."/>
            <person name="Sugiura K."/>
            <person name="Sultana R."/>
            <person name="Takenaka Y."/>
            <person name="Taki K."/>
            <person name="Tammoja K."/>
            <person name="Tan S.L."/>
            <person name="Tang S."/>
            <person name="Taylor M.S."/>
            <person name="Tegner J."/>
            <person name="Teichmann S.A."/>
            <person name="Ueda H.R."/>
            <person name="van Nimwegen E."/>
            <person name="Verardo R."/>
            <person name="Wei C.L."/>
            <person name="Yagi K."/>
            <person name="Yamanishi H."/>
            <person name="Zabarovsky E."/>
            <person name="Zhu S."/>
            <person name="Zimmer A."/>
            <person name="Hide W."/>
            <person name="Bult C."/>
            <person name="Grimmond S.M."/>
            <person name="Teasdale R.D."/>
            <person name="Liu E.T."/>
            <person name="Brusic V."/>
            <person name="Quackenbush J."/>
            <person name="Wahlestedt C."/>
            <person name="Mattick J.S."/>
            <person name="Hume D.A."/>
            <person name="Kai C."/>
            <person name="Sasaki D."/>
            <person name="Tomaru Y."/>
            <person name="Fukuda S."/>
            <person name="Kanamori-Katayama M."/>
            <person name="Suzuki M."/>
            <person name="Aoki J."/>
            <person name="Arakawa T."/>
            <person name="Iida J."/>
            <person name="Imamura K."/>
            <person name="Itoh M."/>
            <person name="Kato T."/>
            <person name="Kawaji H."/>
            <person name="Kawagashira N."/>
            <person name="Kawashima T."/>
            <person name="Kojima M."/>
            <person name="Kondo S."/>
            <person name="Konno H."/>
            <person name="Nakano K."/>
            <person name="Ninomiya N."/>
            <person name="Nishio T."/>
            <person name="Okada M."/>
            <person name="Plessy C."/>
            <person name="Shibata K."/>
            <person name="Shiraki T."/>
            <person name="Suzuki S."/>
            <person name="Tagami M."/>
            <person name="Waki K."/>
            <person name="Watahiki A."/>
            <person name="Okamura-Oho Y."/>
            <person name="Suzuki H."/>
            <person name="Kawai J."/>
            <person name="Hayashizaki Y."/>
        </authorList>
    </citation>
    <scope>NUCLEOTIDE SEQUENCE [LARGE SCALE MRNA] (ISOFORM 2)</scope>
    <source>
        <strain>C57BL/6J</strain>
        <tissue>Pituitary</tissue>
    </source>
</reference>
<reference key="3">
    <citation type="journal article" date="2009" name="PLoS Biol.">
        <title>Lineage-specific biology revealed by a finished genome assembly of the mouse.</title>
        <authorList>
            <person name="Church D.M."/>
            <person name="Goodstadt L."/>
            <person name="Hillier L.W."/>
            <person name="Zody M.C."/>
            <person name="Goldstein S."/>
            <person name="She X."/>
            <person name="Bult C.J."/>
            <person name="Agarwala R."/>
            <person name="Cherry J.L."/>
            <person name="DiCuccio M."/>
            <person name="Hlavina W."/>
            <person name="Kapustin Y."/>
            <person name="Meric P."/>
            <person name="Maglott D."/>
            <person name="Birtle Z."/>
            <person name="Marques A.C."/>
            <person name="Graves T."/>
            <person name="Zhou S."/>
            <person name="Teague B."/>
            <person name="Potamousis K."/>
            <person name="Churas C."/>
            <person name="Place M."/>
            <person name="Herschleb J."/>
            <person name="Runnheim R."/>
            <person name="Forrest D."/>
            <person name="Amos-Landgraf J."/>
            <person name="Schwartz D.C."/>
            <person name="Cheng Z."/>
            <person name="Lindblad-Toh K."/>
            <person name="Eichler E.E."/>
            <person name="Ponting C.P."/>
        </authorList>
    </citation>
    <scope>NUCLEOTIDE SEQUENCE [LARGE SCALE GENOMIC DNA]</scope>
    <source>
        <strain>C57BL/6J</strain>
    </source>
</reference>
<reference key="4">
    <citation type="journal article" date="2004" name="Genome Res.">
        <title>The status, quality, and expansion of the NIH full-length cDNA project: the Mammalian Gene Collection (MGC).</title>
        <authorList>
            <consortium name="The MGC Project Team"/>
        </authorList>
    </citation>
    <scope>NUCLEOTIDE SEQUENCE [LARGE SCALE MRNA] (ISOFORM 3)</scope>
    <source>
        <tissue>Mammary tumor</tissue>
    </source>
</reference>
<reference key="5">
    <citation type="journal article" date="2002" name="Endocrinology">
        <title>Involvement of Rab27b in the regulated secretion of pituitary hormones.</title>
        <authorList>
            <person name="Zhao S."/>
            <person name="Torii S."/>
            <person name="Yokota-Hashimoto H."/>
            <person name="Takeuchi T."/>
            <person name="Izumi T."/>
        </authorList>
    </citation>
    <scope>INTERACTION WITH RAB27A AND RAB27B</scope>
</reference>
<reference key="6">
    <citation type="journal article" date="2002" name="J. Biol. Chem.">
        <title>The Slp homology domain of synaptotagmin-like proteins 1-4 and Slac2 functions as a novel Rab27A binding domain.</title>
        <authorList>
            <person name="Kuroda T.S."/>
            <person name="Fukuda M."/>
            <person name="Ariga H."/>
            <person name="Mikoshiba K."/>
        </authorList>
    </citation>
    <scope>INTERACTION WITH RAB27A</scope>
</reference>
<reference key="7">
    <citation type="journal article" date="2002" name="Mol. Cell. Biol.">
        <title>Granuphilin modulates the exocytosis of secretory granules through interaction with syntaxin 1a.</title>
        <authorList>
            <person name="Torii S."/>
            <person name="Zhao S."/>
            <person name="Yi Z."/>
            <person name="Takeuchi T."/>
            <person name="Izumi T."/>
        </authorList>
    </citation>
    <scope>MUTAGENESIS OF LEU-43 AND TRP-118</scope>
    <scope>INTERACTION WITH RAB27A AND STX1A</scope>
</reference>
<reference key="8">
    <citation type="journal article" date="2003" name="J. Biol. Chem.">
        <title>Slp4-a/granuphilin-a inhibits dense-core vesicle exocytosis through interaction with the GDP-bound form of Rab27A in PC12 cells.</title>
        <authorList>
            <person name="Fukuda M."/>
        </authorList>
    </citation>
    <scope>FUNCTION</scope>
    <scope>MUTAGENESIS OF GLU-14; ILE-18; VAL-21 AND ASP-32</scope>
    <scope>INTERACTION WITH RAB27A; STXBP1; RAB3A AND RAB8A</scope>
</reference>
<reference key="9">
    <citation type="journal article" date="2007" name="Proc. Natl. Acad. Sci. U.S.A.">
        <title>Large-scale phosphorylation analysis of mouse liver.</title>
        <authorList>
            <person name="Villen J."/>
            <person name="Beausoleil S.A."/>
            <person name="Gerber S.A."/>
            <person name="Gygi S.P."/>
        </authorList>
    </citation>
    <scope>PHOSPHORYLATION [LARGE SCALE ANALYSIS] AT SER-218</scope>
    <scope>IDENTIFICATION BY MASS SPECTROMETRY [LARGE SCALE ANALYSIS]</scope>
    <source>
        <tissue>Liver</tissue>
    </source>
</reference>
<reference key="10">
    <citation type="journal article" date="2010" name="Cell">
        <title>A tissue-specific atlas of mouse protein phosphorylation and expression.</title>
        <authorList>
            <person name="Huttlin E.L."/>
            <person name="Jedrychowski M.P."/>
            <person name="Elias J.E."/>
            <person name="Goswami T."/>
            <person name="Rad R."/>
            <person name="Beausoleil S.A."/>
            <person name="Villen J."/>
            <person name="Haas W."/>
            <person name="Sowa M.E."/>
            <person name="Gygi S.P."/>
        </authorList>
    </citation>
    <scope>PHOSPHORYLATION [LARGE SCALE ANALYSIS] AT SER-202 AND SER-275</scope>
    <scope>IDENTIFICATION BY MASS SPECTROMETRY [LARGE SCALE ANALYSIS]</scope>
    <source>
        <tissue>Kidney</tissue>
        <tissue>Liver</tissue>
        <tissue>Lung</tissue>
        <tissue>Pancreas</tissue>
        <tissue>Spleen</tissue>
        <tissue>Testis</tissue>
    </source>
</reference>
<reference key="11">
    <citation type="journal article" date="2013" name="Proc. Natl. Acad. Sci. U.S.A.">
        <title>Structural basis of cargo recognitions for class V myosins.</title>
        <authorList>
            <person name="Wei Z."/>
            <person name="Liu X."/>
            <person name="Yu C."/>
            <person name="Zhang M."/>
        </authorList>
    </citation>
    <scope>INTERACTION WITH MYO5A</scope>
</reference>
<feature type="chain" id="PRO_0000190217" description="Synaptotagmin-like protein 4">
    <location>
        <begin position="1"/>
        <end position="673"/>
    </location>
</feature>
<feature type="domain" description="RabBD" evidence="3">
    <location>
        <begin position="4"/>
        <end position="122"/>
    </location>
</feature>
<feature type="domain" description="C2 1" evidence="2">
    <location>
        <begin position="358"/>
        <end position="480"/>
    </location>
</feature>
<feature type="domain" description="C2 2" evidence="2">
    <location>
        <begin position="509"/>
        <end position="635"/>
    </location>
</feature>
<feature type="zinc finger region" description="FYVE-type">
    <location>
        <begin position="63"/>
        <end position="105"/>
    </location>
</feature>
<feature type="region of interest" description="Disordered" evidence="4">
    <location>
        <begin position="184"/>
        <end position="253"/>
    </location>
</feature>
<feature type="modified residue" description="Phosphoserine" evidence="16">
    <location>
        <position position="202"/>
    </location>
</feature>
<feature type="modified residue" description="Phosphoserine" evidence="1">
    <location>
        <position position="205"/>
    </location>
</feature>
<feature type="modified residue" description="Phosphoserine" evidence="15">
    <location>
        <position position="218"/>
    </location>
</feature>
<feature type="modified residue" description="Phosphoserine" evidence="1">
    <location>
        <position position="222"/>
    </location>
</feature>
<feature type="modified residue" description="Phosphoserine" evidence="16">
    <location>
        <position position="275"/>
    </location>
</feature>
<feature type="modified residue" description="Phosphoserine" evidence="1">
    <location>
        <position position="490"/>
    </location>
</feature>
<feature type="splice variant" id="VSP_007902" description="In isoform 3." evidence="12">
    <original>ISTESSPGLPAHKGELVVSLKYIPASKLPVGGDRKKSKGGEGGELQVWIKEAKNLTAAKSGGTSDSFVKGYLLPMRNKASKRKTPVMKKTLSPHYNHTFVYNGVRLEDLQHMCLELTVWDREPLASNDFLGGVRLGVGTGISNGEVVDWMDSTGEEVSLWQKMRQYPGSWAEGTLQLRSSMVKQKLGV</original>
    <variation>VVCFKGRSQLASQVNCL</variation>
    <location>
        <begin position="486"/>
        <end position="673"/>
    </location>
</feature>
<feature type="splice variant" id="VSP_007900" description="In isoform 2." evidence="11 13">
    <original>ISTESSPGLPAHKGELV</original>
    <variation>GSVMAKWWTGWIRLVKK</variation>
    <location>
        <begin position="486"/>
        <end position="502"/>
    </location>
</feature>
<feature type="splice variant" id="VSP_007901" description="In isoform 2." evidence="11 13">
    <location>
        <begin position="503"/>
        <end position="673"/>
    </location>
</feature>
<feature type="mutagenesis site" description="Abolishes interaction with RAB27A." evidence="9">
    <original>E</original>
    <variation>A</variation>
    <location>
        <position position="14"/>
    </location>
</feature>
<feature type="mutagenesis site" description="Abolishes interaction with RAB27A." evidence="9">
    <original>I</original>
    <variation>A</variation>
    <location>
        <position position="18"/>
    </location>
</feature>
<feature type="mutagenesis site" description="Abolishes interaction with RAB27A." evidence="9">
    <original>V</original>
    <variation>A</variation>
    <location>
        <position position="21"/>
    </location>
</feature>
<feature type="mutagenesis site" description="Abolishes interaction with RAB27A." evidence="9">
    <original>D</original>
    <variation>A</variation>
    <location>
        <position position="32"/>
    </location>
</feature>
<feature type="mutagenesis site" description="Strongly reduces interaction with STX1A." evidence="8">
    <original>L</original>
    <variation>A</variation>
    <location>
        <position position="43"/>
    </location>
</feature>
<feature type="mutagenesis site" description="Strongly reduces interaction with RAB27A." evidence="8">
    <original>W</original>
    <variation>S</variation>
    <location>
        <position position="118"/>
    </location>
</feature>
<sequence>MSEILDLSFLSEMERDLILGVLQRDEELRKADEKRIRRLKNELLEIKRKGAKRGSQHYSDRTCARCQEGLGRLIPKSSTCVGCNHLVCRECRVLESNGSWRCKVCSKEIELKKATGDWFYDQKVNRFDYRTGSEIIRMSLRQKPAVNKRETAGQSLLQQTQMGDIWPGRRIIQEQQQREQSVLFEVPKTRSGKSALEAESESLDSYTADSDSTSRRDSLDKSGLFPEWKKMSAPKSQVEKEIPPGNQNAVCGDEGDMVFKKNTKKVLRPSEYTKSVIDLRPEDVAQESGILGDRSKSVPGLSVDMEEEEEEEEDIDHLVKLHRQKLARGSMQSGSSMSTLGSIMSIYSEAGDFGNISVTGKIAFSLKFEQKTQTLVIHVKECHQLAYADEAKKRSNPYVKTYLLPDKSRQGKRKTSIKRDTINPLYDETFRYEISESLLAQRTLQFSVWHHGRFGRNTFLGEAEVHMDSWKLDKKLDHCLPLHGKISTESSPGLPAHKGELVVSLKYIPASKLPVGGDRKKSKGGEGGELQVWIKEAKNLTAAKSGGTSDSFVKGYLLPMRNKASKRKTPVMKKTLSPHYNHTFVYNGVRLEDLQHMCLELTVWDREPLASNDFLGGVRLGVGTGISNGEVVDWMDSTGEEVSLWQKMRQYPGSWAEGTLQLRSSMVKQKLGV</sequence>
<accession>Q9R0Q1</accession>
<accession>B1AVI8</accession>
<accession>B1AVI9</accession>
<accession>Q8R321</accession>
<accession>Q9R0Q0</accession>
<dbReference type="EMBL" id="AB025258">
    <property type="protein sequence ID" value="BAA84656.1"/>
    <property type="molecule type" value="mRNA"/>
</dbReference>
<dbReference type="EMBL" id="AB025259">
    <property type="protein sequence ID" value="BAA84657.1"/>
    <property type="molecule type" value="mRNA"/>
</dbReference>
<dbReference type="EMBL" id="AK030401">
    <property type="protein sequence ID" value="BAC26945.1"/>
    <property type="molecule type" value="mRNA"/>
</dbReference>
<dbReference type="EMBL" id="AL691421">
    <property type="status" value="NOT_ANNOTATED_CDS"/>
    <property type="molecule type" value="Genomic_DNA"/>
</dbReference>
<dbReference type="EMBL" id="BC026819">
    <property type="protein sequence ID" value="AAH26819.1"/>
    <property type="molecule type" value="mRNA"/>
</dbReference>
<dbReference type="CCDS" id="CCDS30388.1">
    <molecule id="Q9R0Q1-1"/>
</dbReference>
<dbReference type="CCDS" id="CCDS72429.1">
    <molecule id="Q9R0Q1-2"/>
</dbReference>
<dbReference type="CCDS" id="CCDS81169.1">
    <molecule id="Q9R0Q1-3"/>
</dbReference>
<dbReference type="RefSeq" id="NP_001277646.1">
    <molecule id="Q9R0Q1-2"/>
    <property type="nucleotide sequence ID" value="NM_001290717.1"/>
</dbReference>
<dbReference type="RefSeq" id="NP_001277647.1">
    <molecule id="Q9R0Q1-2"/>
    <property type="nucleotide sequence ID" value="NM_001290718.1"/>
</dbReference>
<dbReference type="RefSeq" id="NP_001277648.1">
    <molecule id="Q9R0Q1-3"/>
    <property type="nucleotide sequence ID" value="NM_001290719.1"/>
</dbReference>
<dbReference type="RefSeq" id="NP_038785.1">
    <molecule id="Q9R0Q1-1"/>
    <property type="nucleotide sequence ID" value="NM_013757.2"/>
</dbReference>
<dbReference type="RefSeq" id="XP_006528614.1">
    <molecule id="Q9R0Q1-1"/>
    <property type="nucleotide sequence ID" value="XM_006528551.4"/>
</dbReference>
<dbReference type="SMR" id="Q9R0Q1"/>
<dbReference type="BioGRID" id="205168">
    <property type="interactions" value="2"/>
</dbReference>
<dbReference type="DIP" id="DIP-31497N"/>
<dbReference type="FunCoup" id="Q9R0Q1">
    <property type="interactions" value="608"/>
</dbReference>
<dbReference type="IntAct" id="Q9R0Q1">
    <property type="interactions" value="4"/>
</dbReference>
<dbReference type="STRING" id="10090.ENSMUSP00000033608"/>
<dbReference type="GlyGen" id="Q9R0Q1">
    <property type="glycosylation" value="1 site, 1 N-linked glycan (1 site)"/>
</dbReference>
<dbReference type="iPTMnet" id="Q9R0Q1"/>
<dbReference type="PhosphoSitePlus" id="Q9R0Q1"/>
<dbReference type="jPOST" id="Q9R0Q1"/>
<dbReference type="PaxDb" id="10090-ENSMUSP00000033608"/>
<dbReference type="ProteomicsDB" id="254754">
    <molecule id="Q9R0Q1-1"/>
</dbReference>
<dbReference type="ProteomicsDB" id="254755">
    <molecule id="Q9R0Q1-2"/>
</dbReference>
<dbReference type="ProteomicsDB" id="254756">
    <molecule id="Q9R0Q1-3"/>
</dbReference>
<dbReference type="Antibodypedia" id="28523">
    <property type="antibodies" value="182 antibodies from 23 providers"/>
</dbReference>
<dbReference type="DNASU" id="27359"/>
<dbReference type="Ensembl" id="ENSMUST00000033608.15">
    <molecule id="Q9R0Q1-1"/>
    <property type="protein sequence ID" value="ENSMUSP00000033608.9"/>
    <property type="gene ID" value="ENSMUSG00000031255.15"/>
</dbReference>
<dbReference type="Ensembl" id="ENSMUST00000113294.8">
    <molecule id="Q9R0Q1-3"/>
    <property type="protein sequence ID" value="ENSMUSP00000108919.2"/>
    <property type="gene ID" value="ENSMUSG00000031255.15"/>
</dbReference>
<dbReference type="Ensembl" id="ENSMUST00000113297.9">
    <molecule id="Q9R0Q1-2"/>
    <property type="protein sequence ID" value="ENSMUSP00000108922.3"/>
    <property type="gene ID" value="ENSMUSG00000031255.15"/>
</dbReference>
<dbReference type="GeneID" id="27359"/>
<dbReference type="KEGG" id="mmu:27359"/>
<dbReference type="UCSC" id="uc009ufe.2">
    <molecule id="Q9R0Q1-1"/>
    <property type="organism name" value="mouse"/>
</dbReference>
<dbReference type="UCSC" id="uc009uff.2">
    <molecule id="Q9R0Q1-2"/>
    <property type="organism name" value="mouse"/>
</dbReference>
<dbReference type="UCSC" id="uc009ufh.3">
    <molecule id="Q9R0Q1-3"/>
    <property type="organism name" value="mouse"/>
</dbReference>
<dbReference type="AGR" id="MGI:1351606"/>
<dbReference type="CTD" id="94121"/>
<dbReference type="MGI" id="MGI:1351606">
    <property type="gene designation" value="Sytl4"/>
</dbReference>
<dbReference type="VEuPathDB" id="HostDB:ENSMUSG00000031255"/>
<dbReference type="eggNOG" id="KOG1028">
    <property type="taxonomic scope" value="Eukaryota"/>
</dbReference>
<dbReference type="GeneTree" id="ENSGT00940000159060"/>
<dbReference type="HOGENOM" id="CLU_002711_5_0_1"/>
<dbReference type="InParanoid" id="Q9R0Q1"/>
<dbReference type="OMA" id="YIPSAKH"/>
<dbReference type="OrthoDB" id="195679at2759"/>
<dbReference type="PhylomeDB" id="Q9R0Q1"/>
<dbReference type="TreeFam" id="TF341184"/>
<dbReference type="Reactome" id="R-MMU-114608">
    <property type="pathway name" value="Platelet degranulation"/>
</dbReference>
<dbReference type="BioGRID-ORCS" id="27359">
    <property type="hits" value="3 hits in 77 CRISPR screens"/>
</dbReference>
<dbReference type="PRO" id="PR:Q9R0Q1"/>
<dbReference type="Proteomes" id="UP000000589">
    <property type="component" value="Chromosome X"/>
</dbReference>
<dbReference type="RNAct" id="Q9R0Q1">
    <property type="molecule type" value="protein"/>
</dbReference>
<dbReference type="Bgee" id="ENSMUSG00000031255">
    <property type="expression patterns" value="Expressed in superior cervical ganglion and 156 other cell types or tissues"/>
</dbReference>
<dbReference type="ExpressionAtlas" id="Q9R0Q1">
    <property type="expression patterns" value="baseline and differential"/>
</dbReference>
<dbReference type="GO" id="GO:0005768">
    <property type="term" value="C:endosome"/>
    <property type="evidence" value="ECO:0007669"/>
    <property type="project" value="Ensembl"/>
</dbReference>
<dbReference type="GO" id="GO:0005886">
    <property type="term" value="C:plasma membrane"/>
    <property type="evidence" value="ECO:0000314"/>
    <property type="project" value="UniProtKB"/>
</dbReference>
<dbReference type="GO" id="GO:0030141">
    <property type="term" value="C:secretory granule"/>
    <property type="evidence" value="ECO:0000314"/>
    <property type="project" value="MGI"/>
</dbReference>
<dbReference type="GO" id="GO:0030658">
    <property type="term" value="C:transport vesicle membrane"/>
    <property type="evidence" value="ECO:0007669"/>
    <property type="project" value="UniProtKB-SubCell"/>
</dbReference>
<dbReference type="GO" id="GO:0042043">
    <property type="term" value="F:neurexin family protein binding"/>
    <property type="evidence" value="ECO:0000314"/>
    <property type="project" value="UniProtKB"/>
</dbReference>
<dbReference type="GO" id="GO:0005543">
    <property type="term" value="F:phospholipid binding"/>
    <property type="evidence" value="ECO:0000314"/>
    <property type="project" value="MGI"/>
</dbReference>
<dbReference type="GO" id="GO:0031267">
    <property type="term" value="F:small GTPase binding"/>
    <property type="evidence" value="ECO:0007669"/>
    <property type="project" value="InterPro"/>
</dbReference>
<dbReference type="GO" id="GO:0008270">
    <property type="term" value="F:zinc ion binding"/>
    <property type="evidence" value="ECO:0000303"/>
    <property type="project" value="UniProtKB"/>
</dbReference>
<dbReference type="GO" id="GO:0006887">
    <property type="term" value="P:exocytosis"/>
    <property type="evidence" value="ECO:0000314"/>
    <property type="project" value="MGI"/>
</dbReference>
<dbReference type="GO" id="GO:0030073">
    <property type="term" value="P:insulin secretion"/>
    <property type="evidence" value="ECO:0000315"/>
    <property type="project" value="MGI"/>
</dbReference>
<dbReference type="GO" id="GO:0006886">
    <property type="term" value="P:intracellular protein transport"/>
    <property type="evidence" value="ECO:0007669"/>
    <property type="project" value="InterPro"/>
</dbReference>
<dbReference type="GO" id="GO:0032418">
    <property type="term" value="P:lysosome localization"/>
    <property type="evidence" value="ECO:0007669"/>
    <property type="project" value="Ensembl"/>
</dbReference>
<dbReference type="GO" id="GO:0071985">
    <property type="term" value="P:multivesicular body sorting pathway"/>
    <property type="evidence" value="ECO:0007669"/>
    <property type="project" value="Ensembl"/>
</dbReference>
<dbReference type="GO" id="GO:0046676">
    <property type="term" value="P:negative regulation of insulin secretion"/>
    <property type="evidence" value="ECO:0000315"/>
    <property type="project" value="MGI"/>
</dbReference>
<dbReference type="GO" id="GO:0001778">
    <property type="term" value="P:plasma membrane repair"/>
    <property type="evidence" value="ECO:0007669"/>
    <property type="project" value="Ensembl"/>
</dbReference>
<dbReference type="GO" id="GO:0045921">
    <property type="term" value="P:positive regulation of exocytosis"/>
    <property type="evidence" value="ECO:0007669"/>
    <property type="project" value="Ensembl"/>
</dbReference>
<dbReference type="GO" id="GO:0050714">
    <property type="term" value="P:positive regulation of protein secretion"/>
    <property type="evidence" value="ECO:0007669"/>
    <property type="project" value="Ensembl"/>
</dbReference>
<dbReference type="GO" id="GO:1905684">
    <property type="term" value="P:regulation of plasma membrane repair"/>
    <property type="evidence" value="ECO:0007669"/>
    <property type="project" value="Ensembl"/>
</dbReference>
<dbReference type="CDD" id="cd04029">
    <property type="entry name" value="C2A_SLP-4_5"/>
    <property type="match status" value="1"/>
</dbReference>
<dbReference type="CDD" id="cd04020">
    <property type="entry name" value="C2B_SLP_1-2-3-4"/>
    <property type="match status" value="1"/>
</dbReference>
<dbReference type="CDD" id="cd15764">
    <property type="entry name" value="FYVE_Slp4"/>
    <property type="match status" value="1"/>
</dbReference>
<dbReference type="FunFam" id="2.60.40.150:FF:000121">
    <property type="entry name" value="Synaptotagmin-like 4, isoform CRA_a"/>
    <property type="match status" value="1"/>
</dbReference>
<dbReference type="FunFam" id="2.60.40.150:FF:000006">
    <property type="entry name" value="Synaptotagmin-like 5, isoform CRA_a"/>
    <property type="match status" value="1"/>
</dbReference>
<dbReference type="FunFam" id="3.30.40.10:FF:000018">
    <property type="entry name" value="Synaptotagmin-like 5, isoform CRA_a"/>
    <property type="match status" value="1"/>
</dbReference>
<dbReference type="Gene3D" id="2.60.40.150">
    <property type="entry name" value="C2 domain"/>
    <property type="match status" value="2"/>
</dbReference>
<dbReference type="Gene3D" id="3.30.40.10">
    <property type="entry name" value="Zinc/RING finger domain, C3HC4 (zinc finger)"/>
    <property type="match status" value="1"/>
</dbReference>
<dbReference type="InterPro" id="IPR000008">
    <property type="entry name" value="C2_dom"/>
</dbReference>
<dbReference type="InterPro" id="IPR035892">
    <property type="entry name" value="C2_domain_sf"/>
</dbReference>
<dbReference type="InterPro" id="IPR041282">
    <property type="entry name" value="FYVE_2"/>
</dbReference>
<dbReference type="InterPro" id="IPR044134">
    <property type="entry name" value="FYVE_Slp4"/>
</dbReference>
<dbReference type="InterPro" id="IPR010911">
    <property type="entry name" value="Rab_BD"/>
</dbReference>
<dbReference type="InterPro" id="IPR037303">
    <property type="entry name" value="SLP-4/5_C2A"/>
</dbReference>
<dbReference type="InterPro" id="IPR043567">
    <property type="entry name" value="SYTL1-5_C2B"/>
</dbReference>
<dbReference type="InterPro" id="IPR011011">
    <property type="entry name" value="Znf_FYVE_PHD"/>
</dbReference>
<dbReference type="InterPro" id="IPR013083">
    <property type="entry name" value="Znf_RING/FYVE/PHD"/>
</dbReference>
<dbReference type="PANTHER" id="PTHR45716">
    <property type="entry name" value="BITESIZE, ISOFORM I"/>
    <property type="match status" value="1"/>
</dbReference>
<dbReference type="PANTHER" id="PTHR45716:SF4">
    <property type="entry name" value="SYNAPTOTAGMIN-LIKE PROTEIN 4"/>
    <property type="match status" value="1"/>
</dbReference>
<dbReference type="Pfam" id="PF00168">
    <property type="entry name" value="C2"/>
    <property type="match status" value="2"/>
</dbReference>
<dbReference type="Pfam" id="PF02318">
    <property type="entry name" value="FYVE_2"/>
    <property type="match status" value="1"/>
</dbReference>
<dbReference type="SMART" id="SM00239">
    <property type="entry name" value="C2"/>
    <property type="match status" value="2"/>
</dbReference>
<dbReference type="SUPFAM" id="SSF49562">
    <property type="entry name" value="C2 domain (Calcium/lipid-binding domain, CaLB)"/>
    <property type="match status" value="2"/>
</dbReference>
<dbReference type="SUPFAM" id="SSF57903">
    <property type="entry name" value="FYVE/PHD zinc finger"/>
    <property type="match status" value="1"/>
</dbReference>
<dbReference type="PROSITE" id="PS50004">
    <property type="entry name" value="C2"/>
    <property type="match status" value="2"/>
</dbReference>
<dbReference type="PROSITE" id="PS50916">
    <property type="entry name" value="RABBD"/>
    <property type="match status" value="1"/>
</dbReference>
<evidence type="ECO:0000250" key="1">
    <source>
        <dbReference type="UniProtKB" id="Q96C24"/>
    </source>
</evidence>
<evidence type="ECO:0000255" key="2">
    <source>
        <dbReference type="PROSITE-ProRule" id="PRU00041"/>
    </source>
</evidence>
<evidence type="ECO:0000255" key="3">
    <source>
        <dbReference type="PROSITE-ProRule" id="PRU00234"/>
    </source>
</evidence>
<evidence type="ECO:0000256" key="4">
    <source>
        <dbReference type="SAM" id="MobiDB-lite"/>
    </source>
</evidence>
<evidence type="ECO:0000269" key="5">
    <source>
    </source>
</evidence>
<evidence type="ECO:0000269" key="6">
    <source>
    </source>
</evidence>
<evidence type="ECO:0000269" key="7">
    <source>
    </source>
</evidence>
<evidence type="ECO:0000269" key="8">
    <source>
    </source>
</evidence>
<evidence type="ECO:0000269" key="9">
    <source>
    </source>
</evidence>
<evidence type="ECO:0000269" key="10">
    <source>
    </source>
</evidence>
<evidence type="ECO:0000303" key="11">
    <source>
    </source>
</evidence>
<evidence type="ECO:0000303" key="12">
    <source>
    </source>
</evidence>
<evidence type="ECO:0000303" key="13">
    <source>
    </source>
</evidence>
<evidence type="ECO:0000305" key="14"/>
<evidence type="ECO:0007744" key="15">
    <source>
    </source>
</evidence>
<evidence type="ECO:0007744" key="16">
    <source>
    </source>
</evidence>
<keyword id="KW-0025">Alternative splicing</keyword>
<keyword id="KW-0968">Cytoplasmic vesicle</keyword>
<keyword id="KW-0472">Membrane</keyword>
<keyword id="KW-0479">Metal-binding</keyword>
<keyword id="KW-0597">Phosphoprotein</keyword>
<keyword id="KW-1185">Reference proteome</keyword>
<keyword id="KW-0677">Repeat</keyword>
<keyword id="KW-0862">Zinc</keyword>
<keyword id="KW-0863">Zinc-finger</keyword>